<name>NDX1_SOLLC</name>
<evidence type="ECO:0000256" key="1">
    <source>
        <dbReference type="SAM" id="MobiDB-lite"/>
    </source>
</evidence>
<evidence type="ECO:0000269" key="2">
    <source>
    </source>
</evidence>
<evidence type="ECO:0000303" key="3">
    <source>
    </source>
</evidence>
<gene>
    <name evidence="3" type="primary">NXD1</name>
    <name type="ordered locus">Solyc12g041880.1</name>
</gene>
<proteinExistence type="predicted"/>
<feature type="chain" id="PRO_0000435897" description="Protein NEOXANTHIN-DEFICIENT 1">
    <location>
        <begin position="1"/>
        <end position="295"/>
    </location>
</feature>
<feature type="region of interest" description="Disordered" evidence="1">
    <location>
        <begin position="221"/>
        <end position="251"/>
    </location>
</feature>
<comment type="function">
    <text evidence="2">Required for neoxanthin biosynthesis. Probably not involved directly in the enzymatic conversion of violaxanthin to neoxanthin. Is necessary but not sufficient for neoxanthin synthesis. Seems not required for abscisic acid (ABA) biosynthesis in response to drought stress.</text>
</comment>
<comment type="disruption phenotype">
    <text evidence="2">Pale yellow flowers. Absence of neoxanthin and reduction by half of xanthophyll levels in petals.</text>
</comment>
<accession>K4DEY3</accession>
<sequence length="295" mass="32376">MEVKDTNCTSLGYGKPPWIFKGSALYQLHLVKAENARAFIPKECKLVEAFGYTLGGFFLASYDDSPAGIFDELVVIAGLVWNPPTSCAWAARVLVGSDEACLHGRKVVGLPSQVARFSKKITALPQKPESKSSSFLRRIGLRTSSNYKNHMDVEVTEIKKQTAMSICNINVNATASQQDSKGWMGPLIKMSLPNFSGRTKYNSDLLKYSCQIECRVRAVQPAKVSGPSESDADKENSSEDQSSNVESVSRVPRGTKRNFSISVMLSKPILALEFNHLKMRVEAPTTVTACSHDTT</sequence>
<keyword id="KW-1185">Reference proteome</keyword>
<organism>
    <name type="scientific">Solanum lycopersicum</name>
    <name type="common">Tomato</name>
    <name type="synonym">Lycopersicon esculentum</name>
    <dbReference type="NCBI Taxonomy" id="4081"/>
    <lineage>
        <taxon>Eukaryota</taxon>
        <taxon>Viridiplantae</taxon>
        <taxon>Streptophyta</taxon>
        <taxon>Embryophyta</taxon>
        <taxon>Tracheophyta</taxon>
        <taxon>Spermatophyta</taxon>
        <taxon>Magnoliopsida</taxon>
        <taxon>eudicotyledons</taxon>
        <taxon>Gunneridae</taxon>
        <taxon>Pentapetalae</taxon>
        <taxon>asterids</taxon>
        <taxon>lamiids</taxon>
        <taxon>Solanales</taxon>
        <taxon>Solanaceae</taxon>
        <taxon>Solanoideae</taxon>
        <taxon>Solaneae</taxon>
        <taxon>Solanum</taxon>
        <taxon>Solanum subgen. Lycopersicon</taxon>
    </lineage>
</organism>
<reference key="1">
    <citation type="journal article" date="2012" name="Nature">
        <title>The tomato genome sequence provides insights into fleshy fruit evolution.</title>
        <authorList>
            <consortium name="Tomato Genome Consortium"/>
        </authorList>
    </citation>
    <scope>NUCLEOTIDE SEQUENCE [LARGE SCALE GENOMIC DNA]</scope>
    <source>
        <strain>cv. Heinz 1706</strain>
    </source>
</reference>
<reference key="2">
    <citation type="journal article" date="2014" name="Plant J.">
        <title>The tomato mutation nxd1 reveals a gene necessary for neoxanthin biosynthesis and demonstrates that violaxanthin is a sufficient precursor for abscisic acid biosynthesis.</title>
        <authorList>
            <person name="Neuman H."/>
            <person name="Galpaz N."/>
            <person name="Cunningham F.X. Jr."/>
            <person name="Zamir D."/>
            <person name="Hirschberg J."/>
        </authorList>
    </citation>
    <scope>FUNCTION</scope>
    <scope>DISRUPTION PHENOTYPE</scope>
</reference>
<protein>
    <recommendedName>
        <fullName evidence="3">Protein NEOXANTHIN-DEFICIENT 1</fullName>
    </recommendedName>
</protein>
<dbReference type="RefSeq" id="NP_001316023.1">
    <property type="nucleotide sequence ID" value="NM_001329094.1"/>
</dbReference>
<dbReference type="FunCoup" id="K4DEY3">
    <property type="interactions" value="132"/>
</dbReference>
<dbReference type="STRING" id="4081.K4DEY3"/>
<dbReference type="PaxDb" id="4081-Solyc12g041880.1.1"/>
<dbReference type="EnsemblPlants" id="Solyc12g041880.2.1">
    <property type="protein sequence ID" value="Solyc12g041880.2.1"/>
    <property type="gene ID" value="Solyc12g041880.2"/>
</dbReference>
<dbReference type="GeneID" id="101248551"/>
<dbReference type="Gramene" id="Solyc12g041880.2.1">
    <property type="protein sequence ID" value="Solyc12g041880.2.1"/>
    <property type="gene ID" value="Solyc12g041880.2"/>
</dbReference>
<dbReference type="KEGG" id="sly:101248551"/>
<dbReference type="eggNOG" id="ENOG502QU37">
    <property type="taxonomic scope" value="Eukaryota"/>
</dbReference>
<dbReference type="HOGENOM" id="CLU_068991_0_0_1"/>
<dbReference type="InParanoid" id="K4DEY3"/>
<dbReference type="OMA" id="VRPAKIW"/>
<dbReference type="OrthoDB" id="9970474at2759"/>
<dbReference type="PhylomeDB" id="K4DEY3"/>
<dbReference type="Proteomes" id="UP000004994">
    <property type="component" value="Chromosome 12"/>
</dbReference>
<dbReference type="GO" id="GO:0016123">
    <property type="term" value="P:xanthophyll biosynthetic process"/>
    <property type="evidence" value="ECO:0000315"/>
    <property type="project" value="UniProtKB"/>
</dbReference>
<dbReference type="FunFam" id="2.40.400.10:FF:000003">
    <property type="entry name" value="Protein NEOXANTHIN-DEFICIENT 1"/>
    <property type="match status" value="1"/>
</dbReference>
<dbReference type="Gene3D" id="2.40.400.10">
    <property type="entry name" value="Acetoacetate decarboxylase-like"/>
    <property type="match status" value="1"/>
</dbReference>
<dbReference type="InterPro" id="IPR023375">
    <property type="entry name" value="ADC_dom_sf"/>
</dbReference>
<dbReference type="InterPro" id="IPR039343">
    <property type="entry name" value="NDX1-like"/>
</dbReference>
<dbReference type="PANTHER" id="PTHR35467">
    <property type="match status" value="1"/>
</dbReference>
<dbReference type="PANTHER" id="PTHR35467:SF2">
    <property type="entry name" value="PROTEIN NEOXANTHIN-DEFICIENT 1"/>
    <property type="match status" value="1"/>
</dbReference>
<dbReference type="SUPFAM" id="SSF160104">
    <property type="entry name" value="Acetoacetate decarboxylase-like"/>
    <property type="match status" value="1"/>
</dbReference>